<accession>Q6C9P3</accession>
<proteinExistence type="inferred from homology"/>
<name>DBP3_YARLI</name>
<comment type="function">
    <text evidence="1">ATP-dependent RNA helicase required for 60S ribosomal subunit synthesis. Involved in efficient pre-rRNA processing, predominantly at site A3, which is necessary for the normal formation of 25S and 5.8S rRNAs (By similarity).</text>
</comment>
<comment type="catalytic activity">
    <reaction>
        <text>ATP + H2O = ADP + phosphate + H(+)</text>
        <dbReference type="Rhea" id="RHEA:13065"/>
        <dbReference type="ChEBI" id="CHEBI:15377"/>
        <dbReference type="ChEBI" id="CHEBI:15378"/>
        <dbReference type="ChEBI" id="CHEBI:30616"/>
        <dbReference type="ChEBI" id="CHEBI:43474"/>
        <dbReference type="ChEBI" id="CHEBI:456216"/>
        <dbReference type="EC" id="3.6.4.13"/>
    </reaction>
</comment>
<comment type="subcellular location">
    <subcellularLocation>
        <location evidence="1">Nucleus</location>
        <location evidence="1">Nucleolus</location>
    </subcellularLocation>
</comment>
<comment type="domain">
    <text>The Q motif is unique to and characteristic of the DEAD box family of RNA helicases and controls ATP binding and hydrolysis.</text>
</comment>
<comment type="similarity">
    <text evidence="5">Belongs to the DEAD box helicase family. DDX5/DBP2 subfamily.</text>
</comment>
<organism>
    <name type="scientific">Yarrowia lipolytica (strain CLIB 122 / E 150)</name>
    <name type="common">Yeast</name>
    <name type="synonym">Candida lipolytica</name>
    <dbReference type="NCBI Taxonomy" id="284591"/>
    <lineage>
        <taxon>Eukaryota</taxon>
        <taxon>Fungi</taxon>
        <taxon>Dikarya</taxon>
        <taxon>Ascomycota</taxon>
        <taxon>Saccharomycotina</taxon>
        <taxon>Dipodascomycetes</taxon>
        <taxon>Dipodascales</taxon>
        <taxon>Dipodascales incertae sedis</taxon>
        <taxon>Yarrowia</taxon>
    </lineage>
</organism>
<reference key="1">
    <citation type="journal article" date="2004" name="Nature">
        <title>Genome evolution in yeasts.</title>
        <authorList>
            <person name="Dujon B."/>
            <person name="Sherman D."/>
            <person name="Fischer G."/>
            <person name="Durrens P."/>
            <person name="Casaregola S."/>
            <person name="Lafontaine I."/>
            <person name="de Montigny J."/>
            <person name="Marck C."/>
            <person name="Neuveglise C."/>
            <person name="Talla E."/>
            <person name="Goffard N."/>
            <person name="Frangeul L."/>
            <person name="Aigle M."/>
            <person name="Anthouard V."/>
            <person name="Babour A."/>
            <person name="Barbe V."/>
            <person name="Barnay S."/>
            <person name="Blanchin S."/>
            <person name="Beckerich J.-M."/>
            <person name="Beyne E."/>
            <person name="Bleykasten C."/>
            <person name="Boisrame A."/>
            <person name="Boyer J."/>
            <person name="Cattolico L."/>
            <person name="Confanioleri F."/>
            <person name="de Daruvar A."/>
            <person name="Despons L."/>
            <person name="Fabre E."/>
            <person name="Fairhead C."/>
            <person name="Ferry-Dumazet H."/>
            <person name="Groppi A."/>
            <person name="Hantraye F."/>
            <person name="Hennequin C."/>
            <person name="Jauniaux N."/>
            <person name="Joyet P."/>
            <person name="Kachouri R."/>
            <person name="Kerrest A."/>
            <person name="Koszul R."/>
            <person name="Lemaire M."/>
            <person name="Lesur I."/>
            <person name="Ma L."/>
            <person name="Muller H."/>
            <person name="Nicaud J.-M."/>
            <person name="Nikolski M."/>
            <person name="Oztas S."/>
            <person name="Ozier-Kalogeropoulos O."/>
            <person name="Pellenz S."/>
            <person name="Potier S."/>
            <person name="Richard G.-F."/>
            <person name="Straub M.-L."/>
            <person name="Suleau A."/>
            <person name="Swennen D."/>
            <person name="Tekaia F."/>
            <person name="Wesolowski-Louvel M."/>
            <person name="Westhof E."/>
            <person name="Wirth B."/>
            <person name="Zeniou-Meyer M."/>
            <person name="Zivanovic Y."/>
            <person name="Bolotin-Fukuhara M."/>
            <person name="Thierry A."/>
            <person name="Bouchier C."/>
            <person name="Caudron B."/>
            <person name="Scarpelli C."/>
            <person name="Gaillardin C."/>
            <person name="Weissenbach J."/>
            <person name="Wincker P."/>
            <person name="Souciet J.-L."/>
        </authorList>
    </citation>
    <scope>NUCLEOTIDE SEQUENCE [LARGE SCALE GENOMIC DNA]</scope>
    <source>
        <strain>CLIB 122 / E 150</strain>
    </source>
</reference>
<keyword id="KW-0067">ATP-binding</keyword>
<keyword id="KW-0347">Helicase</keyword>
<keyword id="KW-0378">Hydrolase</keyword>
<keyword id="KW-0547">Nucleotide-binding</keyword>
<keyword id="KW-0539">Nucleus</keyword>
<keyword id="KW-1185">Reference proteome</keyword>
<keyword id="KW-0690">Ribosome biogenesis</keyword>
<keyword id="KW-0694">RNA-binding</keyword>
<keyword id="KW-0698">rRNA processing</keyword>
<gene>
    <name type="primary">DBP3</name>
    <name type="ordered locus">YALI0D09449g</name>
</gene>
<feature type="chain" id="PRO_0000232183" description="ATP-dependent RNA helicase DBP3">
    <location>
        <begin position="1"/>
        <end position="532"/>
    </location>
</feature>
<feature type="domain" description="Helicase ATP-binding" evidence="2">
    <location>
        <begin position="155"/>
        <end position="327"/>
    </location>
</feature>
<feature type="domain" description="Helicase C-terminal" evidence="3">
    <location>
        <begin position="356"/>
        <end position="502"/>
    </location>
</feature>
<feature type="region of interest" description="Disordered" evidence="4">
    <location>
        <begin position="1"/>
        <end position="78"/>
    </location>
</feature>
<feature type="short sequence motif" description="Q motif">
    <location>
        <begin position="126"/>
        <end position="152"/>
    </location>
</feature>
<feature type="short sequence motif" description="DEAD box">
    <location>
        <begin position="274"/>
        <end position="277"/>
    </location>
</feature>
<feature type="compositionally biased region" description="Basic residues" evidence="4">
    <location>
        <begin position="15"/>
        <end position="58"/>
    </location>
</feature>
<feature type="binding site" evidence="2">
    <location>
        <begin position="168"/>
        <end position="175"/>
    </location>
    <ligand>
        <name>ATP</name>
        <dbReference type="ChEBI" id="CHEBI:30616"/>
    </ligand>
</feature>
<dbReference type="EC" id="3.6.4.13"/>
<dbReference type="EMBL" id="CR382130">
    <property type="protein sequence ID" value="CAG80807.1"/>
    <property type="molecule type" value="Genomic_DNA"/>
</dbReference>
<dbReference type="RefSeq" id="XP_502619.1">
    <property type="nucleotide sequence ID" value="XM_502619.1"/>
</dbReference>
<dbReference type="SMR" id="Q6C9P3"/>
<dbReference type="FunCoup" id="Q6C9P3">
    <property type="interactions" value="410"/>
</dbReference>
<dbReference type="STRING" id="284591.Q6C9P3"/>
<dbReference type="EnsemblFungi" id="CAG80807">
    <property type="protein sequence ID" value="CAG80807"/>
    <property type="gene ID" value="YALI0_D09449g"/>
</dbReference>
<dbReference type="KEGG" id="yli:2910846"/>
<dbReference type="VEuPathDB" id="FungiDB:YALI0_D09449g"/>
<dbReference type="HOGENOM" id="CLU_003041_1_5_1"/>
<dbReference type="InParanoid" id="Q6C9P3"/>
<dbReference type="OMA" id="KKTHDMY"/>
<dbReference type="OrthoDB" id="116349at4891"/>
<dbReference type="Proteomes" id="UP000001300">
    <property type="component" value="Chromosome D"/>
</dbReference>
<dbReference type="GO" id="GO:0005730">
    <property type="term" value="C:nucleolus"/>
    <property type="evidence" value="ECO:0000318"/>
    <property type="project" value="GO_Central"/>
</dbReference>
<dbReference type="GO" id="GO:0005524">
    <property type="term" value="F:ATP binding"/>
    <property type="evidence" value="ECO:0007669"/>
    <property type="project" value="UniProtKB-KW"/>
</dbReference>
<dbReference type="GO" id="GO:0016887">
    <property type="term" value="F:ATP hydrolysis activity"/>
    <property type="evidence" value="ECO:0007669"/>
    <property type="project" value="RHEA"/>
</dbReference>
<dbReference type="GO" id="GO:0003729">
    <property type="term" value="F:mRNA binding"/>
    <property type="evidence" value="ECO:0000318"/>
    <property type="project" value="GO_Central"/>
</dbReference>
<dbReference type="GO" id="GO:0003724">
    <property type="term" value="F:RNA helicase activity"/>
    <property type="evidence" value="ECO:0000318"/>
    <property type="project" value="GO_Central"/>
</dbReference>
<dbReference type="GO" id="GO:0006364">
    <property type="term" value="P:rRNA processing"/>
    <property type="evidence" value="ECO:0000318"/>
    <property type="project" value="GO_Central"/>
</dbReference>
<dbReference type="CDD" id="cd00268">
    <property type="entry name" value="DEADc"/>
    <property type="match status" value="1"/>
</dbReference>
<dbReference type="CDD" id="cd18787">
    <property type="entry name" value="SF2_C_DEAD"/>
    <property type="match status" value="1"/>
</dbReference>
<dbReference type="FunFam" id="3.40.50.300:FF:000008">
    <property type="entry name" value="ATP-dependent RNA helicase RhlB"/>
    <property type="match status" value="1"/>
</dbReference>
<dbReference type="Gene3D" id="3.40.50.300">
    <property type="entry name" value="P-loop containing nucleotide triphosphate hydrolases"/>
    <property type="match status" value="2"/>
</dbReference>
<dbReference type="InterPro" id="IPR011545">
    <property type="entry name" value="DEAD/DEAH_box_helicase_dom"/>
</dbReference>
<dbReference type="InterPro" id="IPR014001">
    <property type="entry name" value="Helicase_ATP-bd"/>
</dbReference>
<dbReference type="InterPro" id="IPR001650">
    <property type="entry name" value="Helicase_C-like"/>
</dbReference>
<dbReference type="InterPro" id="IPR027417">
    <property type="entry name" value="P-loop_NTPase"/>
</dbReference>
<dbReference type="InterPro" id="IPR000629">
    <property type="entry name" value="RNA-helicase_DEAD-box_CS"/>
</dbReference>
<dbReference type="InterPro" id="IPR014014">
    <property type="entry name" value="RNA_helicase_DEAD_Q_motif"/>
</dbReference>
<dbReference type="PANTHER" id="PTHR47958">
    <property type="entry name" value="ATP-DEPENDENT RNA HELICASE DBP3"/>
    <property type="match status" value="1"/>
</dbReference>
<dbReference type="Pfam" id="PF00270">
    <property type="entry name" value="DEAD"/>
    <property type="match status" value="1"/>
</dbReference>
<dbReference type="Pfam" id="PF00271">
    <property type="entry name" value="Helicase_C"/>
    <property type="match status" value="1"/>
</dbReference>
<dbReference type="SMART" id="SM00487">
    <property type="entry name" value="DEXDc"/>
    <property type="match status" value="1"/>
</dbReference>
<dbReference type="SMART" id="SM00490">
    <property type="entry name" value="HELICc"/>
    <property type="match status" value="1"/>
</dbReference>
<dbReference type="SUPFAM" id="SSF52540">
    <property type="entry name" value="P-loop containing nucleoside triphosphate hydrolases"/>
    <property type="match status" value="1"/>
</dbReference>
<dbReference type="PROSITE" id="PS00039">
    <property type="entry name" value="DEAD_ATP_HELICASE"/>
    <property type="match status" value="1"/>
</dbReference>
<dbReference type="PROSITE" id="PS51192">
    <property type="entry name" value="HELICASE_ATP_BIND_1"/>
    <property type="match status" value="1"/>
</dbReference>
<dbReference type="PROSITE" id="PS51194">
    <property type="entry name" value="HELICASE_CTER"/>
    <property type="match status" value="1"/>
</dbReference>
<dbReference type="PROSITE" id="PS51195">
    <property type="entry name" value="Q_MOTIF"/>
    <property type="match status" value="1"/>
</dbReference>
<sequence>MGKRDRTEDDEVVTKKVKLDKKDKKEKKEKKDKKDKKDKKDKKDKKDKKEKKEKKEKKEKKEEVSDEEEVAEEKPKMTYTASANTIKSSGEYTQCDDLTNVSQSTIDNYFKEHTITIEGEQMRPTMEFSHVTLDPRITKVLTKFPRPTPIQAVSWPYLLAGKDMVGVAETGSGKTFTFAVPALEHVLSTSGGKGVRVLVVSPTRELAMQIYDNIKELCDVVGLHAVCVYGGVPKEQQRSDLKRASFVIATPGRLCDLIDEGSCDLSKVSYLVLDEADRMLEKGFEEDIKKIIGSTRPTGRQTVMFSATWPPEVRKLAEGFMKTPTKVMIGERDELAANKRITQSVEVLDPRAKEGRLLDLLRQYANDDFKILIFALYKKEATRVENTLTRRGYGVAAIHGDLSQQQRTKALDEFKKGEKNILLATDVAARGLDIPNVKLVINLTFPLTVEDYVHRIGRTGRAGKTGQAITLFTEHEKHLSGALINVLRGADQPVPDELLKFGGHTKKKEHGAYGAFFKDVDMTKKAKKITFD</sequence>
<protein>
    <recommendedName>
        <fullName>ATP-dependent RNA helicase DBP3</fullName>
        <ecNumber>3.6.4.13</ecNumber>
    </recommendedName>
</protein>
<evidence type="ECO:0000250" key="1"/>
<evidence type="ECO:0000255" key="2">
    <source>
        <dbReference type="PROSITE-ProRule" id="PRU00541"/>
    </source>
</evidence>
<evidence type="ECO:0000255" key="3">
    <source>
        <dbReference type="PROSITE-ProRule" id="PRU00542"/>
    </source>
</evidence>
<evidence type="ECO:0000256" key="4">
    <source>
        <dbReference type="SAM" id="MobiDB-lite"/>
    </source>
</evidence>
<evidence type="ECO:0000305" key="5"/>